<feature type="chain" id="PRO_0000155909" description="Ribonuclease Z">
    <location>
        <begin position="1"/>
        <end position="309"/>
    </location>
</feature>
<feature type="active site" description="Proton acceptor" evidence="1">
    <location>
        <position position="67"/>
    </location>
</feature>
<feature type="binding site" evidence="1">
    <location>
        <position position="63"/>
    </location>
    <ligand>
        <name>Zn(2+)</name>
        <dbReference type="ChEBI" id="CHEBI:29105"/>
        <label>1</label>
        <note>catalytic</note>
    </ligand>
</feature>
<feature type="binding site" evidence="1">
    <location>
        <position position="65"/>
    </location>
    <ligand>
        <name>Zn(2+)</name>
        <dbReference type="ChEBI" id="CHEBI:29105"/>
        <label>1</label>
        <note>catalytic</note>
    </ligand>
</feature>
<feature type="binding site" evidence="1">
    <location>
        <position position="67"/>
    </location>
    <ligand>
        <name>Zn(2+)</name>
        <dbReference type="ChEBI" id="CHEBI:29105"/>
        <label>2</label>
        <note>catalytic</note>
    </ligand>
</feature>
<feature type="binding site" evidence="1">
    <location>
        <position position="68"/>
    </location>
    <ligand>
        <name>Zn(2+)</name>
        <dbReference type="ChEBI" id="CHEBI:29105"/>
        <label>2</label>
        <note>catalytic</note>
    </ligand>
</feature>
<feature type="binding site" evidence="1">
    <location>
        <position position="145"/>
    </location>
    <ligand>
        <name>Zn(2+)</name>
        <dbReference type="ChEBI" id="CHEBI:29105"/>
        <label>1</label>
        <note>catalytic</note>
    </ligand>
</feature>
<feature type="binding site" evidence="1">
    <location>
        <position position="216"/>
    </location>
    <ligand>
        <name>Zn(2+)</name>
        <dbReference type="ChEBI" id="CHEBI:29105"/>
        <label>1</label>
        <note>catalytic</note>
    </ligand>
</feature>
<feature type="binding site" evidence="1">
    <location>
        <position position="216"/>
    </location>
    <ligand>
        <name>Zn(2+)</name>
        <dbReference type="ChEBI" id="CHEBI:29105"/>
        <label>2</label>
        <note>catalytic</note>
    </ligand>
</feature>
<feature type="binding site" evidence="1">
    <location>
        <position position="274"/>
    </location>
    <ligand>
        <name>Zn(2+)</name>
        <dbReference type="ChEBI" id="CHEBI:29105"/>
        <label>2</label>
        <note>catalytic</note>
    </ligand>
</feature>
<accession>P0DF22</accession>
<accession>P60198</accession>
<accession>Q9A056</accession>
<keyword id="KW-0255">Endonuclease</keyword>
<keyword id="KW-0378">Hydrolase</keyword>
<keyword id="KW-0479">Metal-binding</keyword>
<keyword id="KW-0540">Nuclease</keyword>
<keyword id="KW-0819">tRNA processing</keyword>
<keyword id="KW-0862">Zinc</keyword>
<comment type="function">
    <text evidence="1">Zinc phosphodiesterase, which displays some tRNA 3'-processing endonuclease activity. Probably involved in tRNA maturation, by removing a 3'-trailer from precursor tRNA.</text>
</comment>
<comment type="catalytic activity">
    <reaction evidence="1">
        <text>Endonucleolytic cleavage of RNA, removing extra 3' nucleotides from tRNA precursor, generating 3' termini of tRNAs. A 3'-hydroxy group is left at the tRNA terminus and a 5'-phosphoryl group is left at the trailer molecule.</text>
        <dbReference type="EC" id="3.1.26.11"/>
    </reaction>
</comment>
<comment type="cofactor">
    <cofactor evidence="1">
        <name>Zn(2+)</name>
        <dbReference type="ChEBI" id="CHEBI:29105"/>
    </cofactor>
    <text evidence="1">Binds 2 Zn(2+) ions.</text>
</comment>
<comment type="subunit">
    <text evidence="1">Homodimer.</text>
</comment>
<comment type="similarity">
    <text evidence="1">Belongs to the RNase Z family.</text>
</comment>
<sequence length="309" mass="34430">MELQFLGTGAGQPAKQRNVSSLALKLLDEINEVWMFDCGEGTQRQILETTIKPRKIRKIFITHLHGDHIFGLPGFLSSRSFQASEEQTDLDIYGPIGIKTYVLTSLKVSGARVPYQIHFHEFDDKSLGKIMETDKFEVYAERLAHTIFCMGYRVVQKDLEGTLDAEALKAAGVPFGPLFGKIKNGQDVELEDGRLICAKDYISAPKKGKIITIIGDTRKTSASVKLAKDADVLVHESTYGKGDERIARNHGHSTNMQAAQIAHEAGAKRLLLNHVSARFLGRDCRQMEKDAATIFENVKMVQDLEEVII</sequence>
<evidence type="ECO:0000255" key="1">
    <source>
        <dbReference type="HAMAP-Rule" id="MF_01818"/>
    </source>
</evidence>
<dbReference type="EC" id="3.1.26.11" evidence="1"/>
<dbReference type="EMBL" id="AE014074">
    <property type="protein sequence ID" value="AAM79244.1"/>
    <property type="molecule type" value="Genomic_DNA"/>
</dbReference>
<dbReference type="RefSeq" id="WP_002984894.1">
    <property type="nucleotide sequence ID" value="NC_004070.1"/>
</dbReference>
<dbReference type="SMR" id="P0DF22"/>
<dbReference type="KEGG" id="spg:SpyM3_0637"/>
<dbReference type="HOGENOM" id="CLU_031317_2_0_9"/>
<dbReference type="Proteomes" id="UP000000564">
    <property type="component" value="Chromosome"/>
</dbReference>
<dbReference type="GO" id="GO:0042781">
    <property type="term" value="F:3'-tRNA processing endoribonuclease activity"/>
    <property type="evidence" value="ECO:0007669"/>
    <property type="project" value="UniProtKB-UniRule"/>
</dbReference>
<dbReference type="GO" id="GO:0008270">
    <property type="term" value="F:zinc ion binding"/>
    <property type="evidence" value="ECO:0007669"/>
    <property type="project" value="UniProtKB-UniRule"/>
</dbReference>
<dbReference type="CDD" id="cd07717">
    <property type="entry name" value="RNaseZ_ZiPD-like_MBL-fold"/>
    <property type="match status" value="1"/>
</dbReference>
<dbReference type="FunFam" id="3.60.15.10:FF:000002">
    <property type="entry name" value="Ribonuclease Z"/>
    <property type="match status" value="1"/>
</dbReference>
<dbReference type="Gene3D" id="3.60.15.10">
    <property type="entry name" value="Ribonuclease Z/Hydroxyacylglutathione hydrolase-like"/>
    <property type="match status" value="1"/>
</dbReference>
<dbReference type="HAMAP" id="MF_01818">
    <property type="entry name" value="RNase_Z_BN"/>
    <property type="match status" value="1"/>
</dbReference>
<dbReference type="InterPro" id="IPR001279">
    <property type="entry name" value="Metallo-B-lactamas"/>
</dbReference>
<dbReference type="InterPro" id="IPR036866">
    <property type="entry name" value="RibonucZ/Hydroxyglut_hydro"/>
</dbReference>
<dbReference type="InterPro" id="IPR013471">
    <property type="entry name" value="RNase_Z/BN"/>
</dbReference>
<dbReference type="NCBIfam" id="NF000801">
    <property type="entry name" value="PRK00055.1-3"/>
    <property type="match status" value="1"/>
</dbReference>
<dbReference type="NCBIfam" id="TIGR02651">
    <property type="entry name" value="RNase_Z"/>
    <property type="match status" value="1"/>
</dbReference>
<dbReference type="PANTHER" id="PTHR46018">
    <property type="entry name" value="ZINC PHOSPHODIESTERASE ELAC PROTEIN 1"/>
    <property type="match status" value="1"/>
</dbReference>
<dbReference type="PANTHER" id="PTHR46018:SF2">
    <property type="entry name" value="ZINC PHOSPHODIESTERASE ELAC PROTEIN 1"/>
    <property type="match status" value="1"/>
</dbReference>
<dbReference type="Pfam" id="PF00753">
    <property type="entry name" value="Lactamase_B"/>
    <property type="match status" value="1"/>
</dbReference>
<dbReference type="SUPFAM" id="SSF56281">
    <property type="entry name" value="Metallo-hydrolase/oxidoreductase"/>
    <property type="match status" value="1"/>
</dbReference>
<protein>
    <recommendedName>
        <fullName evidence="1">Ribonuclease Z</fullName>
        <shortName evidence="1">RNase Z</shortName>
        <ecNumber evidence="1">3.1.26.11</ecNumber>
    </recommendedName>
    <alternativeName>
        <fullName evidence="1">tRNA 3 endonuclease</fullName>
    </alternativeName>
    <alternativeName>
        <fullName evidence="1">tRNase Z</fullName>
    </alternativeName>
</protein>
<organism>
    <name type="scientific">Streptococcus pyogenes serotype M3 (strain ATCC BAA-595 / MGAS315)</name>
    <dbReference type="NCBI Taxonomy" id="198466"/>
    <lineage>
        <taxon>Bacteria</taxon>
        <taxon>Bacillati</taxon>
        <taxon>Bacillota</taxon>
        <taxon>Bacilli</taxon>
        <taxon>Lactobacillales</taxon>
        <taxon>Streptococcaceae</taxon>
        <taxon>Streptococcus</taxon>
    </lineage>
</organism>
<gene>
    <name evidence="1" type="primary">rnz</name>
    <name type="ordered locus">SpyM3_0637</name>
</gene>
<name>RNZ_STRP3</name>
<reference key="1">
    <citation type="journal article" date="2002" name="Proc. Natl. Acad. Sci. U.S.A.">
        <title>Genome sequence of a serotype M3 strain of group A Streptococcus: phage-encoded toxins, the high-virulence phenotype, and clone emergence.</title>
        <authorList>
            <person name="Beres S.B."/>
            <person name="Sylva G.L."/>
            <person name="Barbian K.D."/>
            <person name="Lei B."/>
            <person name="Hoff J.S."/>
            <person name="Mammarella N.D."/>
            <person name="Liu M.-Y."/>
            <person name="Smoot J.C."/>
            <person name="Porcella S.F."/>
            <person name="Parkins L.D."/>
            <person name="Campbell D.S."/>
            <person name="Smith T.M."/>
            <person name="McCormick J.K."/>
            <person name="Leung D.Y.M."/>
            <person name="Schlievert P.M."/>
            <person name="Musser J.M."/>
        </authorList>
    </citation>
    <scope>NUCLEOTIDE SEQUENCE [LARGE SCALE GENOMIC DNA]</scope>
    <source>
        <strain>ATCC BAA-595 / MGAS315</strain>
    </source>
</reference>
<proteinExistence type="inferred from homology"/>